<accession>P24882</accession>
<protein>
    <recommendedName>
        <fullName>Cytochrome c oxidase subunit 2</fullName>
        <ecNumber>7.1.1.9</ecNumber>
    </recommendedName>
    <alternativeName>
        <fullName>Cytochrome c oxidase polypeptide II</fullName>
    </alternativeName>
</protein>
<reference key="1">
    <citation type="journal article" date="1992" name="Genetics">
        <title>The mitochondrial genomes of two nematodes, Caenorhabditis elegans and Ascaris suum.</title>
        <authorList>
            <person name="Okimoto R."/>
            <person name="Macfarlane J.L."/>
            <person name="Clary D.O."/>
            <person name="Wolstenholme D.R."/>
        </authorList>
    </citation>
    <scope>NUCLEOTIDE SEQUENCE [GENOMIC DNA]</scope>
    <source>
        <tissue>Body wall muscle</tissue>
        <tissue>Egg</tissue>
    </source>
</reference>
<organism>
    <name type="scientific">Ascaris suum</name>
    <name type="common">Pig roundworm</name>
    <name type="synonym">Ascaris lumbricoides</name>
    <dbReference type="NCBI Taxonomy" id="6253"/>
    <lineage>
        <taxon>Eukaryota</taxon>
        <taxon>Metazoa</taxon>
        <taxon>Ecdysozoa</taxon>
        <taxon>Nematoda</taxon>
        <taxon>Chromadorea</taxon>
        <taxon>Rhabditida</taxon>
        <taxon>Spirurina</taxon>
        <taxon>Ascaridomorpha</taxon>
        <taxon>Ascaridoidea</taxon>
        <taxon>Ascarididae</taxon>
        <taxon>Ascaris</taxon>
    </lineage>
</organism>
<keyword id="KW-0186">Copper</keyword>
<keyword id="KW-0249">Electron transport</keyword>
<keyword id="KW-0460">Magnesium</keyword>
<keyword id="KW-0472">Membrane</keyword>
<keyword id="KW-0479">Metal-binding</keyword>
<keyword id="KW-0496">Mitochondrion</keyword>
<keyword id="KW-0999">Mitochondrion inner membrane</keyword>
<keyword id="KW-0679">Respiratory chain</keyword>
<keyword id="KW-1278">Translocase</keyword>
<keyword id="KW-0812">Transmembrane</keyword>
<keyword id="KW-1133">Transmembrane helix</keyword>
<keyword id="KW-0813">Transport</keyword>
<geneLocation type="mitochondrion"/>
<gene>
    <name type="primary">COII</name>
</gene>
<proteinExistence type="inferred from homology"/>
<evidence type="ECO:0000250" key="1">
    <source>
        <dbReference type="UniProtKB" id="P00410"/>
    </source>
</evidence>
<evidence type="ECO:0000255" key="2"/>
<evidence type="ECO:0000305" key="3"/>
<name>COX2_ASCSU</name>
<feature type="chain" id="PRO_0000183504" description="Cytochrome c oxidase subunit 2">
    <location>
        <begin position="1"/>
        <end position="232"/>
    </location>
</feature>
<feature type="topological domain" description="Mitochondrial intermembrane" evidence="2">
    <location>
        <begin position="1"/>
        <end position="30"/>
    </location>
</feature>
<feature type="transmembrane region" description="Helical" evidence="2">
    <location>
        <begin position="31"/>
        <end position="52"/>
    </location>
</feature>
<feature type="topological domain" description="Mitochondrial matrix" evidence="2">
    <location>
        <begin position="53"/>
        <end position="69"/>
    </location>
</feature>
<feature type="transmembrane region" description="Helical" evidence="2">
    <location>
        <begin position="70"/>
        <end position="89"/>
    </location>
</feature>
<feature type="topological domain" description="Mitochondrial intermembrane" evidence="2">
    <location>
        <begin position="90"/>
        <end position="232"/>
    </location>
</feature>
<feature type="binding site" evidence="1">
    <location>
        <position position="164"/>
    </location>
    <ligand>
        <name>Cu cation</name>
        <dbReference type="ChEBI" id="CHEBI:23378"/>
        <label>A1</label>
    </ligand>
</feature>
<feature type="binding site" evidence="1">
    <location>
        <position position="199"/>
    </location>
    <ligand>
        <name>Cu cation</name>
        <dbReference type="ChEBI" id="CHEBI:23378"/>
        <label>A1</label>
    </ligand>
</feature>
<feature type="binding site" evidence="1">
    <location>
        <position position="199"/>
    </location>
    <ligand>
        <name>Cu cation</name>
        <dbReference type="ChEBI" id="CHEBI:23378"/>
        <label>A2</label>
    </ligand>
</feature>
<feature type="binding site" evidence="1">
    <location>
        <position position="201"/>
    </location>
    <ligand>
        <name>Cu cation</name>
        <dbReference type="ChEBI" id="CHEBI:23378"/>
        <label>A2</label>
    </ligand>
</feature>
<feature type="binding site" evidence="1">
    <location>
        <position position="201"/>
    </location>
    <ligand>
        <name>Mg(2+)</name>
        <dbReference type="ChEBI" id="CHEBI:18420"/>
        <note>ligand shared with subunit 1</note>
    </ligand>
</feature>
<feature type="binding site" evidence="1">
    <location>
        <position position="203"/>
    </location>
    <ligand>
        <name>Cu cation</name>
        <dbReference type="ChEBI" id="CHEBI:23378"/>
        <label>A1</label>
    </ligand>
</feature>
<feature type="binding site" evidence="1">
    <location>
        <position position="203"/>
    </location>
    <ligand>
        <name>Cu cation</name>
        <dbReference type="ChEBI" id="CHEBI:23378"/>
        <label>A2</label>
    </ligand>
</feature>
<feature type="binding site" evidence="1">
    <location>
        <position position="207"/>
    </location>
    <ligand>
        <name>Cu cation</name>
        <dbReference type="ChEBI" id="CHEBI:23378"/>
        <label>A2</label>
    </ligand>
</feature>
<feature type="binding site" evidence="1">
    <location>
        <position position="210"/>
    </location>
    <ligand>
        <name>Cu cation</name>
        <dbReference type="ChEBI" id="CHEBI:23378"/>
        <label>A1</label>
    </ligand>
</feature>
<comment type="function">
    <text evidence="1">Component of the cytochrome c oxidase, the last enzyme in the mitochondrial electron transport chain which drives oxidative phosphorylation. The respiratory chain contains 3 multisubunit complexes succinate dehydrogenase (complex II, CII), ubiquinol-cytochrome c oxidoreductase (cytochrome b-c1 complex, complex III, CIII) and cytochrome c oxidase (complex IV, CIV), that cooperate to transfer electrons derived from NADH and succinate to molecular oxygen, creating an electrochemical gradient over the inner membrane that drives transmembrane transport and the ATP synthase. Cytochrome c oxidase is the component of the respiratory chain that catalyzes the reduction of oxygen to water. Electrons originating from reduced cytochrome c in the intermembrane space (IMS) are transferred via the dinuclear copper A center (CU(A)) of subunit 2 and heme A of subunit 1 to the active site in subunit 1, a binuclear center (BNC) formed by heme A3 and copper B (CU(B)). The BNC reduces molecular oxygen to 2 water molecules using 4 electrons from cytochrome c in the IMS and 4 protons from the mitochondrial matrix.</text>
</comment>
<comment type="catalytic activity">
    <reaction evidence="1">
        <text>4 Fe(II)-[cytochrome c] + O2 + 8 H(+)(in) = 4 Fe(III)-[cytochrome c] + 2 H2O + 4 H(+)(out)</text>
        <dbReference type="Rhea" id="RHEA:11436"/>
        <dbReference type="Rhea" id="RHEA-COMP:10350"/>
        <dbReference type="Rhea" id="RHEA-COMP:14399"/>
        <dbReference type="ChEBI" id="CHEBI:15377"/>
        <dbReference type="ChEBI" id="CHEBI:15378"/>
        <dbReference type="ChEBI" id="CHEBI:15379"/>
        <dbReference type="ChEBI" id="CHEBI:29033"/>
        <dbReference type="ChEBI" id="CHEBI:29034"/>
        <dbReference type="EC" id="7.1.1.9"/>
    </reaction>
    <physiologicalReaction direction="left-to-right" evidence="1">
        <dbReference type="Rhea" id="RHEA:11437"/>
    </physiologicalReaction>
</comment>
<comment type="cofactor">
    <cofactor evidence="1">
        <name>Cu cation</name>
        <dbReference type="ChEBI" id="CHEBI:23378"/>
    </cofactor>
    <text evidence="1">Binds a dinuclear copper A center per subunit.</text>
</comment>
<comment type="subunit">
    <text evidence="1">Component of the cytochrome c oxidase (complex IV, CIV), a multisubunit enzyme composed of a catalytic core of 3 subunits and several supernumerary subunits. The complex exists as a monomer or a dimer and forms supercomplexes (SCs) in the inner mitochondrial membrane with ubiquinol-cytochrome c oxidoreductase (cytochrome b-c1 complex, complex III, CIII).</text>
</comment>
<comment type="subcellular location">
    <subcellularLocation>
        <location evidence="1">Mitochondrion inner membrane</location>
        <topology evidence="1">Multi-pass membrane protein</topology>
    </subcellularLocation>
</comment>
<comment type="similarity">
    <text evidence="3">Belongs to the cytochrome c oxidase subunit 2 family.</text>
</comment>
<sequence>MNNFFQDFNLLFSSSLFSSYMDWFYNFNCSLLFGVLSFVSTMFVYLLLSSFYFKSKKIEYQFGELLCSVFPTLILVMQMVPSLSLLYYYGLMNLDSSLTVKVTGHQWYWSYEFSDIPGLEFDSYMKSLDQLELGEPRLLEVDNRCVVPCDVNIRFCITSGDVIHSWALPSMSIKLDAMSGILSTLSYSFPVVGVFYGQCSEICGANHSFMPVALEVTLLDNFKSWCVGLLSD</sequence>
<dbReference type="EC" id="7.1.1.9"/>
<dbReference type="EMBL" id="X54253">
    <property type="protein sequence ID" value="CAA38172.1"/>
    <property type="molecule type" value="Genomic_DNA"/>
</dbReference>
<dbReference type="PIR" id="S26023">
    <property type="entry name" value="S26023"/>
</dbReference>
<dbReference type="SMR" id="P24882"/>
<dbReference type="CTD" id="4513"/>
<dbReference type="GO" id="GO:0005743">
    <property type="term" value="C:mitochondrial inner membrane"/>
    <property type="evidence" value="ECO:0007669"/>
    <property type="project" value="UniProtKB-SubCell"/>
</dbReference>
<dbReference type="GO" id="GO:0005507">
    <property type="term" value="F:copper ion binding"/>
    <property type="evidence" value="ECO:0007669"/>
    <property type="project" value="InterPro"/>
</dbReference>
<dbReference type="GO" id="GO:0004129">
    <property type="term" value="F:cytochrome-c oxidase activity"/>
    <property type="evidence" value="ECO:0007669"/>
    <property type="project" value="UniProtKB-EC"/>
</dbReference>
<dbReference type="GO" id="GO:0042773">
    <property type="term" value="P:ATP synthesis coupled electron transport"/>
    <property type="evidence" value="ECO:0007669"/>
    <property type="project" value="TreeGrafter"/>
</dbReference>
<dbReference type="CDD" id="cd13912">
    <property type="entry name" value="CcO_II_C"/>
    <property type="match status" value="1"/>
</dbReference>
<dbReference type="FunFam" id="2.60.40.420:FF:000001">
    <property type="entry name" value="Cytochrome c oxidase subunit 2"/>
    <property type="match status" value="1"/>
</dbReference>
<dbReference type="Gene3D" id="1.10.287.90">
    <property type="match status" value="1"/>
</dbReference>
<dbReference type="Gene3D" id="2.60.40.420">
    <property type="entry name" value="Cupredoxins - blue copper proteins"/>
    <property type="match status" value="1"/>
</dbReference>
<dbReference type="InterPro" id="IPR045187">
    <property type="entry name" value="CcO_II"/>
</dbReference>
<dbReference type="InterPro" id="IPR002429">
    <property type="entry name" value="CcO_II-like_C"/>
</dbReference>
<dbReference type="InterPro" id="IPR034210">
    <property type="entry name" value="CcO_II_C"/>
</dbReference>
<dbReference type="InterPro" id="IPR001505">
    <property type="entry name" value="Copper_CuA"/>
</dbReference>
<dbReference type="InterPro" id="IPR008972">
    <property type="entry name" value="Cupredoxin"/>
</dbReference>
<dbReference type="InterPro" id="IPR011759">
    <property type="entry name" value="Cyt_c_oxidase_su2_TM_dom"/>
</dbReference>
<dbReference type="InterPro" id="IPR036257">
    <property type="entry name" value="Cyt_c_oxidase_su2_TM_sf"/>
</dbReference>
<dbReference type="PANTHER" id="PTHR22888:SF9">
    <property type="entry name" value="CYTOCHROME C OXIDASE SUBUNIT 2"/>
    <property type="match status" value="1"/>
</dbReference>
<dbReference type="PANTHER" id="PTHR22888">
    <property type="entry name" value="CYTOCHROME C OXIDASE, SUBUNIT II"/>
    <property type="match status" value="1"/>
</dbReference>
<dbReference type="Pfam" id="PF00116">
    <property type="entry name" value="COX2"/>
    <property type="match status" value="1"/>
</dbReference>
<dbReference type="PRINTS" id="PR01166">
    <property type="entry name" value="CYCOXIDASEII"/>
</dbReference>
<dbReference type="SUPFAM" id="SSF49503">
    <property type="entry name" value="Cupredoxins"/>
    <property type="match status" value="1"/>
</dbReference>
<dbReference type="SUPFAM" id="SSF81464">
    <property type="entry name" value="Cytochrome c oxidase subunit II-like, transmembrane region"/>
    <property type="match status" value="1"/>
</dbReference>
<dbReference type="PROSITE" id="PS00078">
    <property type="entry name" value="COX2"/>
    <property type="match status" value="1"/>
</dbReference>
<dbReference type="PROSITE" id="PS50857">
    <property type="entry name" value="COX2_CUA"/>
    <property type="match status" value="1"/>
</dbReference>
<dbReference type="PROSITE" id="PS50999">
    <property type="entry name" value="COX2_TM"/>
    <property type="match status" value="1"/>
</dbReference>